<sequence length="307" mass="35255">MTVTINKSSVPHKVDFATPLSDVICHIKEDGAVIVRGFMDVETIQKLQEEVDTAVEKGSFGPRYQEYNEEAGEIPKHEIYKRGEGKKTKHMKNLALTSETFRNDVLNHKWMHAVCEQIYGEEFGDYWMNCAHILHLEPGEKAQFFHRDTGVYRVSDFRRRLNDPEFMINFLVSLTEFREDNGATQLIPGSHKWDAAHPPTFYGSDEAVPAILEPGDAVVYLGSLFHGAGENRSLDYRRGMIVSMHPAHFTPMESHFHLPKEIVESMTPLAQQMVGWRTMNNQNKIPIWQAGDDKIEDVLRLQHKEVY</sequence>
<accession>A0A3G9GR23</accession>
<evidence type="ECO:0000250" key="1">
    <source>
        <dbReference type="UniProtKB" id="A0A097ZPD9"/>
    </source>
</evidence>
<evidence type="ECO:0000250" key="2">
    <source>
        <dbReference type="UniProtKB" id="O14832"/>
    </source>
</evidence>
<evidence type="ECO:0000250" key="3">
    <source>
        <dbReference type="UniProtKB" id="Q4WAW9"/>
    </source>
</evidence>
<evidence type="ECO:0000269" key="4">
    <source>
    </source>
</evidence>
<evidence type="ECO:0000269" key="5">
    <source>
    </source>
</evidence>
<evidence type="ECO:0000269" key="6">
    <source>
    </source>
</evidence>
<evidence type="ECO:0000303" key="7">
    <source>
    </source>
</evidence>
<evidence type="ECO:0000305" key="8"/>
<evidence type="ECO:0000305" key="9">
    <source>
    </source>
</evidence>
<gene>
    <name evidence="7" type="primary">cdmD</name>
</gene>
<proteinExistence type="evidence at protein level"/>
<protein>
    <recommendedName>
        <fullName evidence="7">Dioxygenase cdmD</fullName>
        <ecNumber evidence="6">1.14.11.-</ecNumber>
    </recommendedName>
    <alternativeName>
        <fullName evidence="7">chrodrimanin B biosynthesis cluster protein D</fullName>
    </alternativeName>
</protein>
<dbReference type="EC" id="1.14.11.-" evidence="6"/>
<dbReference type="EMBL" id="LC422696">
    <property type="protein sequence ID" value="BBG28483.1"/>
    <property type="molecule type" value="Genomic_DNA"/>
</dbReference>
<dbReference type="SMR" id="A0A3G9GR23"/>
<dbReference type="UniPathway" id="UPA00213"/>
<dbReference type="GO" id="GO:0051213">
    <property type="term" value="F:dioxygenase activity"/>
    <property type="evidence" value="ECO:0007669"/>
    <property type="project" value="UniProtKB-KW"/>
</dbReference>
<dbReference type="GO" id="GO:0046872">
    <property type="term" value="F:metal ion binding"/>
    <property type="evidence" value="ECO:0007669"/>
    <property type="project" value="UniProtKB-KW"/>
</dbReference>
<dbReference type="GO" id="GO:0016114">
    <property type="term" value="P:terpenoid biosynthetic process"/>
    <property type="evidence" value="ECO:0007669"/>
    <property type="project" value="UniProtKB-UniPathway"/>
</dbReference>
<dbReference type="Gene3D" id="2.60.120.620">
    <property type="entry name" value="q2cbj1_9rhob like domain"/>
    <property type="match status" value="1"/>
</dbReference>
<dbReference type="InterPro" id="IPR008775">
    <property type="entry name" value="Phytyl_CoA_dOase-like"/>
</dbReference>
<dbReference type="PANTHER" id="PTHR20883:SF19">
    <property type="entry name" value="MULTIFUNCTIONAL DIOXYGENASE AUSE"/>
    <property type="match status" value="1"/>
</dbReference>
<dbReference type="PANTHER" id="PTHR20883">
    <property type="entry name" value="PHYTANOYL-COA DIOXYGENASE DOMAIN CONTAINING 1"/>
    <property type="match status" value="1"/>
</dbReference>
<dbReference type="Pfam" id="PF05721">
    <property type="entry name" value="PhyH"/>
    <property type="match status" value="1"/>
</dbReference>
<dbReference type="SUPFAM" id="SSF51197">
    <property type="entry name" value="Clavaminate synthase-like"/>
    <property type="match status" value="1"/>
</dbReference>
<feature type="chain" id="PRO_0000449127" description="Dioxygenase cdmD">
    <location>
        <begin position="1"/>
        <end position="307"/>
    </location>
</feature>
<feature type="binding site" evidence="2">
    <location>
        <position position="146"/>
    </location>
    <ligand>
        <name>Fe cation</name>
        <dbReference type="ChEBI" id="CHEBI:24875"/>
    </ligand>
</feature>
<feature type="binding site" evidence="2">
    <location>
        <position position="148"/>
    </location>
    <ligand>
        <name>Fe cation</name>
        <dbReference type="ChEBI" id="CHEBI:24875"/>
    </ligand>
</feature>
<feature type="binding site" evidence="2">
    <location>
        <position position="226"/>
    </location>
    <ligand>
        <name>Fe cation</name>
        <dbReference type="ChEBI" id="CHEBI:24875"/>
    </ligand>
</feature>
<name>CDMD_TALVE</name>
<comment type="function">
    <text evidence="6 9">Dioxygenase; part of the gene cluster that mediates the biosynthesis of chrodrimanin B, a meroterpenoid that acts as a potent blocker of insect GABA-gated chloride channels (PubMed:30417647). The first step of the pathway is the biosynthesis of 6-hydroxymellein by the polyketide synthase cdmE (PubMed:30417647). The prenyltransferase cdmH acts as a 6-hydroxymellein 5-farnesyltransferase and produces the hydrophobic metabolite verruculide C (PubMed:30417647). The FAD-dependent monooxygenase cdmI further converts verruculide C into verruculide B (PubMed:30417647). The terpene cyclase cdmG then produced the pentacyclic molecule 3-hydroxypentacecilide A, the backbone structure of chrodrimanin B, via folding the farnesyl moiety of the substrate into the chair-boat conformation (PubMed:30417647). The short-chain dehydrogenase/reductase cdmF functions as the 3-OH dehydrogenase that oxidizes the C-3 hydroxyl group of 3-hydroxypentacecilide A and produces chrodrimanin C, the dehydrogenated product of 3-hydroxypentacecilide A (PubMed:30417647). The cytochrome P450 monooxygenase cdmJ then accepts both 3-hydroxypentacecilide A and chrodrimanin C and functions as a C-7-beta-hydroxylase to produce respectively chrodrimanin H and chrodrimanin F (PubMed:30417647). The dioxygenase cdmA accepts chrodrimanin H to afford chrodrimanin E, which is further transformed to chrodrimanin A by the dioxygenase cdmD (PubMed:30417647). CdmA can also accept chrodrimanin C as substrate to convert it into verruculide A, which is further converted into chrodrimanin T by cdmD (PubMed:30417647). The last step of the biosynthesis is proposed to be performed by the acetyltransferase cdmC which acetylates chrodrimanin A to yield chrodrimanin B (Probable). The pathway may also lead to the production of additional shunt products, including chrodrimanins T and U (PubMed:30417647).</text>
</comment>
<comment type="catalytic activity">
    <reaction evidence="6">
        <text>verruculide A + 2-oxoglutarate + O2 = chrodrimanin T + succinate + CO2</text>
        <dbReference type="Rhea" id="RHEA:65304"/>
        <dbReference type="ChEBI" id="CHEBI:15379"/>
        <dbReference type="ChEBI" id="CHEBI:16526"/>
        <dbReference type="ChEBI" id="CHEBI:16810"/>
        <dbReference type="ChEBI" id="CHEBI:30031"/>
        <dbReference type="ChEBI" id="CHEBI:156413"/>
        <dbReference type="ChEBI" id="CHEBI:156414"/>
    </reaction>
    <physiologicalReaction direction="left-to-right" evidence="6">
        <dbReference type="Rhea" id="RHEA:65305"/>
    </physiologicalReaction>
</comment>
<comment type="catalytic activity">
    <reaction evidence="6">
        <text>chrodrimanin E + 2-oxoglutarate + O2 = chrodrimanin A + succinate + CO2</text>
        <dbReference type="Rhea" id="RHEA:65320"/>
        <dbReference type="ChEBI" id="CHEBI:15379"/>
        <dbReference type="ChEBI" id="CHEBI:16526"/>
        <dbReference type="ChEBI" id="CHEBI:16810"/>
        <dbReference type="ChEBI" id="CHEBI:30031"/>
        <dbReference type="ChEBI" id="CHEBI:156417"/>
        <dbReference type="ChEBI" id="CHEBI:156418"/>
    </reaction>
    <physiologicalReaction direction="left-to-right" evidence="6">
        <dbReference type="Rhea" id="RHEA:65321"/>
    </physiologicalReaction>
</comment>
<comment type="cofactor">
    <cofactor evidence="1">
        <name>Fe cation</name>
        <dbReference type="ChEBI" id="CHEBI:24875"/>
    </cofactor>
</comment>
<comment type="pathway">
    <text evidence="6">Secondary metabolite biosynthesis; terpenoid biosynthesis.</text>
</comment>
<comment type="subunit">
    <text evidence="3">Homodimer.</text>
</comment>
<comment type="biotechnology">
    <text evidence="4 5">Compounds in the chrodrimanin family such as chrodrimanin A or verruculide A exhibit strong inhibitory activities against protein tyrosine phosphatase 1B (PTP1B) and therefore, they could potentially be developed into drugs for the treatment of type 2 diabetes or obesity (PubMed:26115570). Furthermore, chrodrimanin B, the end product of the pathway involving chrodrimanin A or verruculide A, does not exhibit the PTP1B inhibitory activity, while it functions as a potent blocker of insect GABA-gated chloride channels (PubMed:25902139).</text>
</comment>
<comment type="similarity">
    <text evidence="8">Belongs to the PhyH family.</text>
</comment>
<reference key="1">
    <citation type="journal article" date="2018" name="Org. Lett.">
        <title>Elucidation and heterologous reconstitution of chrodrimanin B biosynthesis.</title>
        <authorList>
            <person name="Bai T."/>
            <person name="Quan Z."/>
            <person name="Zhai R."/>
            <person name="Awakawa T."/>
            <person name="Matsuda Y."/>
            <person name="Abe I."/>
        </authorList>
    </citation>
    <scope>NUCLEOTIDE SEQUENCE [GENOMIC DNA]</scope>
    <scope>FUNCTION</scope>
    <scope>CATALYTIC ACTIVITY</scope>
    <scope>PATHWAY</scope>
    <source>
        <strain>TPU1311</strain>
    </source>
</reference>
<reference key="2">
    <citation type="journal article" date="2015" name="Bioorg. Med. Chem. Lett.">
        <title>Verruculides A and B, two new protein tyrosine phosphatase 1B inhibitors from an Indonesian ascidian-derived Penicillium verruculosum.</title>
        <authorList>
            <person name="Yamazaki H."/>
            <person name="Nakayama W."/>
            <person name="Takahashi O."/>
            <person name="Kirikoshi R."/>
            <person name="Izumikawa Y."/>
            <person name="Iwasaki K."/>
            <person name="Toraiwa K."/>
            <person name="Ukai K."/>
            <person name="Rotinsulu H."/>
            <person name="Wewengkang D.S."/>
            <person name="Sumilat D.A."/>
            <person name="Mangindaan R.E."/>
            <person name="Namikoshi M."/>
        </authorList>
    </citation>
    <scope>BIOTECHNOLOGY</scope>
</reference>
<reference key="3">
    <citation type="journal article" date="2015" name="PLoS ONE">
        <title>Meroterpenoid Chrodrimanins Are Selective and Potent Blockers of Insect GABA-Gated Chloride Channels.</title>
        <authorList>
            <person name="Xu Y."/>
            <person name="Furutani S."/>
            <person name="Ihara M."/>
            <person name="Ling Y."/>
            <person name="Yang X."/>
            <person name="Kai K."/>
            <person name="Hayashi H."/>
            <person name="Matsuda K."/>
        </authorList>
    </citation>
    <scope>BIOTECHNOLOGY</scope>
</reference>
<organism>
    <name type="scientific">Talaromyces verruculosus</name>
    <name type="common">Penicillium verruculosum</name>
    <dbReference type="NCBI Taxonomy" id="198730"/>
    <lineage>
        <taxon>Eukaryota</taxon>
        <taxon>Fungi</taxon>
        <taxon>Dikarya</taxon>
        <taxon>Ascomycota</taxon>
        <taxon>Pezizomycotina</taxon>
        <taxon>Eurotiomycetes</taxon>
        <taxon>Eurotiomycetidae</taxon>
        <taxon>Eurotiales</taxon>
        <taxon>Trichocomaceae</taxon>
        <taxon>Talaromyces</taxon>
        <taxon>Talaromyces sect. Talaromyces</taxon>
    </lineage>
</organism>
<keyword id="KW-0223">Dioxygenase</keyword>
<keyword id="KW-0408">Iron</keyword>
<keyword id="KW-0479">Metal-binding</keyword>
<keyword id="KW-0560">Oxidoreductase</keyword>